<comment type="function">
    <text evidence="1">ATP-dependent carboxylate-amine ligase which exhibits weak glutamate--cysteine ligase activity.</text>
</comment>
<comment type="catalytic activity">
    <reaction evidence="1">
        <text>L-cysteine + L-glutamate + ATP = gamma-L-glutamyl-L-cysteine + ADP + phosphate + H(+)</text>
        <dbReference type="Rhea" id="RHEA:13285"/>
        <dbReference type="ChEBI" id="CHEBI:15378"/>
        <dbReference type="ChEBI" id="CHEBI:29985"/>
        <dbReference type="ChEBI" id="CHEBI:30616"/>
        <dbReference type="ChEBI" id="CHEBI:35235"/>
        <dbReference type="ChEBI" id="CHEBI:43474"/>
        <dbReference type="ChEBI" id="CHEBI:58173"/>
        <dbReference type="ChEBI" id="CHEBI:456216"/>
        <dbReference type="EC" id="6.3.2.2"/>
    </reaction>
</comment>
<comment type="similarity">
    <text evidence="1">Belongs to the glutamate--cysteine ligase type 2 family. YbdK subfamily.</text>
</comment>
<protein>
    <recommendedName>
        <fullName evidence="1">Putative glutamate--cysteine ligase 2-2</fullName>
        <ecNumber evidence="1">6.3.2.2</ecNumber>
    </recommendedName>
    <alternativeName>
        <fullName evidence="1">Gamma-glutamylcysteine synthetase 2-2</fullName>
        <shortName evidence="1">GCS 2-2</shortName>
        <shortName evidence="1">Gamma-GCS 2-2</shortName>
    </alternativeName>
</protein>
<proteinExistence type="inferred from homology"/>
<keyword id="KW-0067">ATP-binding</keyword>
<keyword id="KW-0436">Ligase</keyword>
<keyword id="KW-0547">Nucleotide-binding</keyword>
<gene>
    <name type="ordered locus">Mvan_4929</name>
</gene>
<feature type="chain" id="PRO_0000291502" description="Putative glutamate--cysteine ligase 2-2">
    <location>
        <begin position="1"/>
        <end position="365"/>
    </location>
</feature>
<reference key="1">
    <citation type="submission" date="2006-12" db="EMBL/GenBank/DDBJ databases">
        <title>Complete sequence of Mycobacterium vanbaalenii PYR-1.</title>
        <authorList>
            <consortium name="US DOE Joint Genome Institute"/>
            <person name="Copeland A."/>
            <person name="Lucas S."/>
            <person name="Lapidus A."/>
            <person name="Barry K."/>
            <person name="Detter J.C."/>
            <person name="Glavina del Rio T."/>
            <person name="Hammon N."/>
            <person name="Israni S."/>
            <person name="Dalin E."/>
            <person name="Tice H."/>
            <person name="Pitluck S."/>
            <person name="Singan V."/>
            <person name="Schmutz J."/>
            <person name="Larimer F."/>
            <person name="Land M."/>
            <person name="Hauser L."/>
            <person name="Kyrpides N."/>
            <person name="Anderson I.J."/>
            <person name="Miller C."/>
            <person name="Richardson P."/>
        </authorList>
    </citation>
    <scope>NUCLEOTIDE SEQUENCE [LARGE SCALE GENOMIC DNA]</scope>
    <source>
        <strain>DSM 7251 / JCM 13017 / BCRC 16820 / KCTC 9966 / NRRL B-24157 / PYR-1</strain>
    </source>
</reference>
<accession>A1TEV2</accession>
<sequence>MTDIPTLGVEEEFLLVHPGSGAPVALNREVAARAADMDVELQLELTSCQVETATAVVDDTAHLREQLLHLRRTASAAAEHAGARLLAVGLPPTLPHEFPVTDTPRYRDIGERYGMIAHEQGICGCHVHVAVPDRDAAIAVSNRLRPWLPLLLALTANSAIYRNADTGHASWRSVLWARWPSAGPPPHFDSADEYDAAVQMLSHTGVIRDDGMVYWDVRPSANFPTVEVRVADVPATVDETVLFAALVRGCVMTALEDERHGDPVLPLAPYALKAAYWKAARNGVDGDGVDLENHVPAPVSDLLGYLTERTRPALEAAGDHELVTAGLARVTDLGNGATRQRRAWRRNHDVDDVLAEAAAATLEDG</sequence>
<evidence type="ECO:0000255" key="1">
    <source>
        <dbReference type="HAMAP-Rule" id="MF_01609"/>
    </source>
</evidence>
<dbReference type="EC" id="6.3.2.2" evidence="1"/>
<dbReference type="EMBL" id="CP000511">
    <property type="protein sequence ID" value="ABM15702.1"/>
    <property type="molecule type" value="Genomic_DNA"/>
</dbReference>
<dbReference type="RefSeq" id="WP_011782074.1">
    <property type="nucleotide sequence ID" value="NZ_JACKSD010000328.1"/>
</dbReference>
<dbReference type="SMR" id="A1TEV2"/>
<dbReference type="STRING" id="350058.Mvan_4929"/>
<dbReference type="KEGG" id="mva:Mvan_4929"/>
<dbReference type="eggNOG" id="COG2170">
    <property type="taxonomic scope" value="Bacteria"/>
</dbReference>
<dbReference type="HOGENOM" id="CLU_044848_0_0_11"/>
<dbReference type="Proteomes" id="UP000009159">
    <property type="component" value="Chromosome"/>
</dbReference>
<dbReference type="GO" id="GO:0005524">
    <property type="term" value="F:ATP binding"/>
    <property type="evidence" value="ECO:0007669"/>
    <property type="project" value="UniProtKB-KW"/>
</dbReference>
<dbReference type="GO" id="GO:0004357">
    <property type="term" value="F:glutamate-cysteine ligase activity"/>
    <property type="evidence" value="ECO:0007669"/>
    <property type="project" value="UniProtKB-EC"/>
</dbReference>
<dbReference type="GO" id="GO:0042398">
    <property type="term" value="P:modified amino acid biosynthetic process"/>
    <property type="evidence" value="ECO:0007669"/>
    <property type="project" value="InterPro"/>
</dbReference>
<dbReference type="Gene3D" id="3.30.590.20">
    <property type="match status" value="1"/>
</dbReference>
<dbReference type="HAMAP" id="MF_01609">
    <property type="entry name" value="Glu_cys_ligase_2"/>
    <property type="match status" value="1"/>
</dbReference>
<dbReference type="InterPro" id="IPR050141">
    <property type="entry name" value="GCL_type2/YbdK_subfam"/>
</dbReference>
<dbReference type="InterPro" id="IPR006336">
    <property type="entry name" value="GCS2"/>
</dbReference>
<dbReference type="InterPro" id="IPR014746">
    <property type="entry name" value="Gln_synth/guanido_kin_cat_dom"/>
</dbReference>
<dbReference type="InterPro" id="IPR011793">
    <property type="entry name" value="YbdK"/>
</dbReference>
<dbReference type="NCBIfam" id="TIGR02050">
    <property type="entry name" value="gshA_cyan_rel"/>
    <property type="match status" value="1"/>
</dbReference>
<dbReference type="NCBIfam" id="NF010041">
    <property type="entry name" value="PRK13517.1-1"/>
    <property type="match status" value="1"/>
</dbReference>
<dbReference type="PANTHER" id="PTHR36510">
    <property type="entry name" value="GLUTAMATE--CYSTEINE LIGASE 2-RELATED"/>
    <property type="match status" value="1"/>
</dbReference>
<dbReference type="PANTHER" id="PTHR36510:SF1">
    <property type="entry name" value="GLUTAMATE--CYSTEINE LIGASE 2-RELATED"/>
    <property type="match status" value="1"/>
</dbReference>
<dbReference type="Pfam" id="PF04107">
    <property type="entry name" value="GCS2"/>
    <property type="match status" value="1"/>
</dbReference>
<dbReference type="SUPFAM" id="SSF55931">
    <property type="entry name" value="Glutamine synthetase/guanido kinase"/>
    <property type="match status" value="1"/>
</dbReference>
<name>GCS22_MYCVP</name>
<organism>
    <name type="scientific">Mycolicibacterium vanbaalenii (strain DSM 7251 / JCM 13017 / BCRC 16820 / KCTC 9966 / NRRL B-24157 / PYR-1)</name>
    <name type="common">Mycobacterium vanbaalenii</name>
    <dbReference type="NCBI Taxonomy" id="350058"/>
    <lineage>
        <taxon>Bacteria</taxon>
        <taxon>Bacillati</taxon>
        <taxon>Actinomycetota</taxon>
        <taxon>Actinomycetes</taxon>
        <taxon>Mycobacteriales</taxon>
        <taxon>Mycobacteriaceae</taxon>
        <taxon>Mycolicibacterium</taxon>
    </lineage>
</organism>